<dbReference type="EMBL" id="CP000724">
    <property type="protein sequence ID" value="ABR48838.1"/>
    <property type="molecule type" value="Genomic_DNA"/>
</dbReference>
<dbReference type="RefSeq" id="WP_012063811.1">
    <property type="nucleotide sequence ID" value="NC_009633.1"/>
</dbReference>
<dbReference type="SMR" id="A6TRM0"/>
<dbReference type="STRING" id="293826.Amet_2686"/>
<dbReference type="KEGG" id="amt:Amet_2686"/>
<dbReference type="eggNOG" id="COG0233">
    <property type="taxonomic scope" value="Bacteria"/>
</dbReference>
<dbReference type="HOGENOM" id="CLU_073981_2_0_9"/>
<dbReference type="OrthoDB" id="9804006at2"/>
<dbReference type="Proteomes" id="UP000001572">
    <property type="component" value="Chromosome"/>
</dbReference>
<dbReference type="GO" id="GO:0005737">
    <property type="term" value="C:cytoplasm"/>
    <property type="evidence" value="ECO:0007669"/>
    <property type="project" value="UniProtKB-SubCell"/>
</dbReference>
<dbReference type="GO" id="GO:0043023">
    <property type="term" value="F:ribosomal large subunit binding"/>
    <property type="evidence" value="ECO:0007669"/>
    <property type="project" value="TreeGrafter"/>
</dbReference>
<dbReference type="GO" id="GO:0006415">
    <property type="term" value="P:translational termination"/>
    <property type="evidence" value="ECO:0007669"/>
    <property type="project" value="UniProtKB-UniRule"/>
</dbReference>
<dbReference type="CDD" id="cd00520">
    <property type="entry name" value="RRF"/>
    <property type="match status" value="1"/>
</dbReference>
<dbReference type="FunFam" id="1.10.132.20:FF:000001">
    <property type="entry name" value="Ribosome-recycling factor"/>
    <property type="match status" value="1"/>
</dbReference>
<dbReference type="FunFam" id="3.30.1360.40:FF:000001">
    <property type="entry name" value="Ribosome-recycling factor"/>
    <property type="match status" value="1"/>
</dbReference>
<dbReference type="Gene3D" id="3.30.1360.40">
    <property type="match status" value="1"/>
</dbReference>
<dbReference type="Gene3D" id="1.10.132.20">
    <property type="entry name" value="Ribosome-recycling factor"/>
    <property type="match status" value="1"/>
</dbReference>
<dbReference type="HAMAP" id="MF_00040">
    <property type="entry name" value="RRF"/>
    <property type="match status" value="1"/>
</dbReference>
<dbReference type="InterPro" id="IPR002661">
    <property type="entry name" value="Ribosome_recyc_fac"/>
</dbReference>
<dbReference type="InterPro" id="IPR023584">
    <property type="entry name" value="Ribosome_recyc_fac_dom"/>
</dbReference>
<dbReference type="InterPro" id="IPR036191">
    <property type="entry name" value="RRF_sf"/>
</dbReference>
<dbReference type="NCBIfam" id="TIGR00496">
    <property type="entry name" value="frr"/>
    <property type="match status" value="1"/>
</dbReference>
<dbReference type="PANTHER" id="PTHR20982:SF3">
    <property type="entry name" value="MITOCHONDRIAL RIBOSOME RECYCLING FACTOR PSEUDO 1"/>
    <property type="match status" value="1"/>
</dbReference>
<dbReference type="PANTHER" id="PTHR20982">
    <property type="entry name" value="RIBOSOME RECYCLING FACTOR"/>
    <property type="match status" value="1"/>
</dbReference>
<dbReference type="Pfam" id="PF01765">
    <property type="entry name" value="RRF"/>
    <property type="match status" value="1"/>
</dbReference>
<dbReference type="SUPFAM" id="SSF55194">
    <property type="entry name" value="Ribosome recycling factor, RRF"/>
    <property type="match status" value="1"/>
</dbReference>
<feature type="chain" id="PRO_1000057287" description="Ribosome-recycling factor">
    <location>
        <begin position="1"/>
        <end position="185"/>
    </location>
</feature>
<feature type="region of interest" description="Disordered" evidence="2">
    <location>
        <begin position="132"/>
        <end position="152"/>
    </location>
</feature>
<organism>
    <name type="scientific">Alkaliphilus metalliredigens (strain QYMF)</name>
    <dbReference type="NCBI Taxonomy" id="293826"/>
    <lineage>
        <taxon>Bacteria</taxon>
        <taxon>Bacillati</taxon>
        <taxon>Bacillota</taxon>
        <taxon>Clostridia</taxon>
        <taxon>Peptostreptococcales</taxon>
        <taxon>Natronincolaceae</taxon>
        <taxon>Alkaliphilus</taxon>
    </lineage>
</organism>
<gene>
    <name evidence="1" type="primary">frr</name>
    <name type="ordered locus">Amet_2686</name>
</gene>
<accession>A6TRM0</accession>
<name>RRF_ALKMQ</name>
<evidence type="ECO:0000255" key="1">
    <source>
        <dbReference type="HAMAP-Rule" id="MF_00040"/>
    </source>
</evidence>
<evidence type="ECO:0000256" key="2">
    <source>
        <dbReference type="SAM" id="MobiDB-lite"/>
    </source>
</evidence>
<protein>
    <recommendedName>
        <fullName evidence="1">Ribosome-recycling factor</fullName>
        <shortName evidence="1">RRF</shortName>
    </recommendedName>
    <alternativeName>
        <fullName evidence="1">Ribosome-releasing factor</fullName>
    </alternativeName>
</protein>
<proteinExistence type="inferred from homology"/>
<reference key="1">
    <citation type="journal article" date="2016" name="Genome Announc.">
        <title>Complete genome sequence of Alkaliphilus metalliredigens strain QYMF, an alkaliphilic and metal-reducing bacterium isolated from borax-contaminated leachate ponds.</title>
        <authorList>
            <person name="Hwang C."/>
            <person name="Copeland A."/>
            <person name="Lucas S."/>
            <person name="Lapidus A."/>
            <person name="Barry K."/>
            <person name="Detter J.C."/>
            <person name="Glavina Del Rio T."/>
            <person name="Hammon N."/>
            <person name="Israni S."/>
            <person name="Dalin E."/>
            <person name="Tice H."/>
            <person name="Pitluck S."/>
            <person name="Chertkov O."/>
            <person name="Brettin T."/>
            <person name="Bruce D."/>
            <person name="Han C."/>
            <person name="Schmutz J."/>
            <person name="Larimer F."/>
            <person name="Land M.L."/>
            <person name="Hauser L."/>
            <person name="Kyrpides N."/>
            <person name="Mikhailova N."/>
            <person name="Ye Q."/>
            <person name="Zhou J."/>
            <person name="Richardson P."/>
            <person name="Fields M.W."/>
        </authorList>
    </citation>
    <scope>NUCLEOTIDE SEQUENCE [LARGE SCALE GENOMIC DNA]</scope>
    <source>
        <strain>QYMF</strain>
    </source>
</reference>
<keyword id="KW-0963">Cytoplasm</keyword>
<keyword id="KW-0648">Protein biosynthesis</keyword>
<keyword id="KW-1185">Reference proteome</keyword>
<sequence length="185" mass="21141">MQLEVHKRLEEKMTKTLGVLKDDFNSIRAGKANPSMLDRITVDYYGSITPLKQVASVSAPEPRLLIIQPYDPSVINGIEKALMMSDLGLNPSNDGKIIRLNIPQLTEERRKELTKVVKRVAEEGRVALRNGRRDANEQLKKMEKDSELTEDDLKQAQEEVQKITDKFNKQVDEMLVKKELEILEV</sequence>
<comment type="function">
    <text evidence="1">Responsible for the release of ribosomes from messenger RNA at the termination of protein biosynthesis. May increase the efficiency of translation by recycling ribosomes from one round of translation to another.</text>
</comment>
<comment type="subcellular location">
    <subcellularLocation>
        <location evidence="1">Cytoplasm</location>
    </subcellularLocation>
</comment>
<comment type="similarity">
    <text evidence="1">Belongs to the RRF family.</text>
</comment>